<sequence length="245" mass="26819">MKVVVIIPARYGSTRFEAKPLALIAGKPMIQRVYERAAAASSVTGVAVATDDERIVSAVEKFGGKAVMTSDACRSGTDRVFEAGRTLGLTGSDIVVNVQGDQPVFDPECIDEVTAPLIGDPGTGMTTLAFAIVNEREMTDPKDVKMVFDQDGWALYFSRATIPHDRDGNMEFDTYKHLGVYAYTMDFLAEFCSLPEGHLEKIEKLEQLRALEYGLGIKTVVTAYDSPEVDLPEDIARIEALLKDQ</sequence>
<name>KDSB_DESAL</name>
<evidence type="ECO:0000255" key="1">
    <source>
        <dbReference type="HAMAP-Rule" id="MF_00057"/>
    </source>
</evidence>
<gene>
    <name evidence="1" type="primary">kdsB</name>
    <name type="ordered locus">Dalk_0115</name>
</gene>
<reference key="1">
    <citation type="journal article" date="2012" name="Environ. Microbiol.">
        <title>The genome sequence of Desulfatibacillum alkenivorans AK-01: a blueprint for anaerobic alkane oxidation.</title>
        <authorList>
            <person name="Callaghan A.V."/>
            <person name="Morris B.E."/>
            <person name="Pereira I.A."/>
            <person name="McInerney M.J."/>
            <person name="Austin R.N."/>
            <person name="Groves J.T."/>
            <person name="Kukor J.J."/>
            <person name="Suflita J.M."/>
            <person name="Young L.Y."/>
            <person name="Zylstra G.J."/>
            <person name="Wawrik B."/>
        </authorList>
    </citation>
    <scope>NUCLEOTIDE SEQUENCE [LARGE SCALE GENOMIC DNA]</scope>
    <source>
        <strain>AK-01</strain>
    </source>
</reference>
<proteinExistence type="inferred from homology"/>
<accession>B8FKL0</accession>
<keyword id="KW-0963">Cytoplasm</keyword>
<keyword id="KW-0448">Lipopolysaccharide biosynthesis</keyword>
<keyword id="KW-0548">Nucleotidyltransferase</keyword>
<keyword id="KW-1185">Reference proteome</keyword>
<keyword id="KW-0808">Transferase</keyword>
<protein>
    <recommendedName>
        <fullName evidence="1">3-deoxy-manno-octulosonate cytidylyltransferase</fullName>
        <ecNumber evidence="1">2.7.7.38</ecNumber>
    </recommendedName>
    <alternativeName>
        <fullName evidence="1">CMP-2-keto-3-deoxyoctulosonic acid synthase</fullName>
        <shortName evidence="1">CKS</shortName>
        <shortName evidence="1">CMP-KDO synthase</shortName>
    </alternativeName>
</protein>
<organism>
    <name type="scientific">Desulfatibacillum aliphaticivorans</name>
    <dbReference type="NCBI Taxonomy" id="218208"/>
    <lineage>
        <taxon>Bacteria</taxon>
        <taxon>Pseudomonadati</taxon>
        <taxon>Thermodesulfobacteriota</taxon>
        <taxon>Desulfobacteria</taxon>
        <taxon>Desulfobacterales</taxon>
        <taxon>Desulfatibacillaceae</taxon>
        <taxon>Desulfatibacillum</taxon>
    </lineage>
</organism>
<dbReference type="EC" id="2.7.7.38" evidence="1"/>
<dbReference type="EMBL" id="CP001322">
    <property type="protein sequence ID" value="ACL01825.1"/>
    <property type="molecule type" value="Genomic_DNA"/>
</dbReference>
<dbReference type="RefSeq" id="WP_012609265.1">
    <property type="nucleotide sequence ID" value="NC_011768.1"/>
</dbReference>
<dbReference type="SMR" id="B8FKL0"/>
<dbReference type="KEGG" id="dal:Dalk_0115"/>
<dbReference type="eggNOG" id="COG1212">
    <property type="taxonomic scope" value="Bacteria"/>
</dbReference>
<dbReference type="HOGENOM" id="CLU_065038_0_1_7"/>
<dbReference type="UniPathway" id="UPA00030"/>
<dbReference type="UniPathway" id="UPA00358">
    <property type="reaction ID" value="UER00476"/>
</dbReference>
<dbReference type="Proteomes" id="UP000000739">
    <property type="component" value="Chromosome"/>
</dbReference>
<dbReference type="GO" id="GO:0005829">
    <property type="term" value="C:cytosol"/>
    <property type="evidence" value="ECO:0007669"/>
    <property type="project" value="TreeGrafter"/>
</dbReference>
<dbReference type="GO" id="GO:0008690">
    <property type="term" value="F:3-deoxy-manno-octulosonate cytidylyltransferase activity"/>
    <property type="evidence" value="ECO:0007669"/>
    <property type="project" value="UniProtKB-UniRule"/>
</dbReference>
<dbReference type="GO" id="GO:0033468">
    <property type="term" value="P:CMP-keto-3-deoxy-D-manno-octulosonic acid biosynthetic process"/>
    <property type="evidence" value="ECO:0007669"/>
    <property type="project" value="UniProtKB-UniRule"/>
</dbReference>
<dbReference type="GO" id="GO:0009103">
    <property type="term" value="P:lipopolysaccharide biosynthetic process"/>
    <property type="evidence" value="ECO:0007669"/>
    <property type="project" value="UniProtKB-UniRule"/>
</dbReference>
<dbReference type="CDD" id="cd02517">
    <property type="entry name" value="CMP-KDO-Synthetase"/>
    <property type="match status" value="1"/>
</dbReference>
<dbReference type="FunFam" id="3.90.550.10:FF:000011">
    <property type="entry name" value="3-deoxy-manno-octulosonate cytidylyltransferase"/>
    <property type="match status" value="1"/>
</dbReference>
<dbReference type="Gene3D" id="3.90.550.10">
    <property type="entry name" value="Spore Coat Polysaccharide Biosynthesis Protein SpsA, Chain A"/>
    <property type="match status" value="1"/>
</dbReference>
<dbReference type="HAMAP" id="MF_00057">
    <property type="entry name" value="KdsB"/>
    <property type="match status" value="1"/>
</dbReference>
<dbReference type="InterPro" id="IPR003329">
    <property type="entry name" value="Cytidylyl_trans"/>
</dbReference>
<dbReference type="InterPro" id="IPR004528">
    <property type="entry name" value="KdsB"/>
</dbReference>
<dbReference type="InterPro" id="IPR029044">
    <property type="entry name" value="Nucleotide-diphossugar_trans"/>
</dbReference>
<dbReference type="NCBIfam" id="TIGR00466">
    <property type="entry name" value="kdsB"/>
    <property type="match status" value="1"/>
</dbReference>
<dbReference type="NCBIfam" id="NF003950">
    <property type="entry name" value="PRK05450.1-3"/>
    <property type="match status" value="1"/>
</dbReference>
<dbReference type="NCBIfam" id="NF003952">
    <property type="entry name" value="PRK05450.1-5"/>
    <property type="match status" value="1"/>
</dbReference>
<dbReference type="NCBIfam" id="NF009905">
    <property type="entry name" value="PRK13368.1"/>
    <property type="match status" value="1"/>
</dbReference>
<dbReference type="PANTHER" id="PTHR42866">
    <property type="entry name" value="3-DEOXY-MANNO-OCTULOSONATE CYTIDYLYLTRANSFERASE"/>
    <property type="match status" value="1"/>
</dbReference>
<dbReference type="PANTHER" id="PTHR42866:SF2">
    <property type="entry name" value="3-DEOXY-MANNO-OCTULOSONATE CYTIDYLYLTRANSFERASE, MITOCHONDRIAL"/>
    <property type="match status" value="1"/>
</dbReference>
<dbReference type="Pfam" id="PF02348">
    <property type="entry name" value="CTP_transf_3"/>
    <property type="match status" value="1"/>
</dbReference>
<dbReference type="SUPFAM" id="SSF53448">
    <property type="entry name" value="Nucleotide-diphospho-sugar transferases"/>
    <property type="match status" value="1"/>
</dbReference>
<feature type="chain" id="PRO_0000370059" description="3-deoxy-manno-octulosonate cytidylyltransferase">
    <location>
        <begin position="1"/>
        <end position="245"/>
    </location>
</feature>
<comment type="function">
    <text evidence="1">Activates KDO (a required 8-carbon sugar) for incorporation into bacterial lipopolysaccharide in Gram-negative bacteria.</text>
</comment>
<comment type="catalytic activity">
    <reaction evidence="1">
        <text>3-deoxy-alpha-D-manno-oct-2-ulosonate + CTP = CMP-3-deoxy-beta-D-manno-octulosonate + diphosphate</text>
        <dbReference type="Rhea" id="RHEA:23448"/>
        <dbReference type="ChEBI" id="CHEBI:33019"/>
        <dbReference type="ChEBI" id="CHEBI:37563"/>
        <dbReference type="ChEBI" id="CHEBI:85986"/>
        <dbReference type="ChEBI" id="CHEBI:85987"/>
        <dbReference type="EC" id="2.7.7.38"/>
    </reaction>
</comment>
<comment type="pathway">
    <text evidence="1">Nucleotide-sugar biosynthesis; CMP-3-deoxy-D-manno-octulosonate biosynthesis; CMP-3-deoxy-D-manno-octulosonate from 3-deoxy-D-manno-octulosonate and CTP: step 1/1.</text>
</comment>
<comment type="pathway">
    <text evidence="1">Bacterial outer membrane biogenesis; lipopolysaccharide biosynthesis.</text>
</comment>
<comment type="subcellular location">
    <subcellularLocation>
        <location evidence="1">Cytoplasm</location>
    </subcellularLocation>
</comment>
<comment type="similarity">
    <text evidence="1">Belongs to the KdsB family.</text>
</comment>